<accession>Q99NI3</accession>
<gene>
    <name type="primary">Gtf2ird2</name>
</gene>
<protein>
    <recommendedName>
        <fullName>General transcription factor II-I repeat domain-containing protein 2</fullName>
        <shortName>GTF2I repeat domain-containing protein 2</shortName>
    </recommendedName>
    <alternativeName>
        <fullName>Transcription factor GTF2IRD2</fullName>
    </alternativeName>
</protein>
<evidence type="ECO:0000255" key="1">
    <source>
        <dbReference type="PROSITE-ProRule" id="PRU00484"/>
    </source>
</evidence>
<evidence type="ECO:0000256" key="2">
    <source>
        <dbReference type="SAM" id="MobiDB-lite"/>
    </source>
</evidence>
<evidence type="ECO:0000269" key="3">
    <source>
    </source>
</evidence>
<evidence type="ECO:0000269" key="4">
    <source>
    </source>
</evidence>
<comment type="subcellular location">
    <subcellularLocation>
        <location>Nucleus</location>
    </subcellularLocation>
</comment>
<comment type="tissue specificity">
    <text evidence="3">Ubiquitous.</text>
</comment>
<comment type="developmental stage">
    <text evidence="3 4">No expression in embryo at 9.5 dpc and 10.5 dpc. Expressed in tooth epithelium at 13.5 dpc. At the early bell stage, Expression in preameloblasts and preodontoblasts.</text>
</comment>
<comment type="similarity">
    <text evidence="1">Belongs to the TFII-I family.</text>
</comment>
<name>GT2D2_MOUSE</name>
<keyword id="KW-0238">DNA-binding</keyword>
<keyword id="KW-0539">Nucleus</keyword>
<keyword id="KW-1185">Reference proteome</keyword>
<keyword id="KW-0677">Repeat</keyword>
<keyword id="KW-0804">Transcription</keyword>
<keyword id="KW-0805">Transcription regulation</keyword>
<proteinExistence type="evidence at transcript level"/>
<dbReference type="EMBL" id="AY014963">
    <property type="protein sequence ID" value="AAG41674.1"/>
    <property type="molecule type" value="mRNA"/>
</dbReference>
<dbReference type="EMBL" id="AY116023">
    <property type="protein sequence ID" value="AAM48282.1"/>
    <property type="molecule type" value="mRNA"/>
</dbReference>
<dbReference type="EMBL" id="BC132157">
    <property type="protein sequence ID" value="AAI32158.1"/>
    <property type="molecule type" value="mRNA"/>
</dbReference>
<dbReference type="EMBL" id="BC132159">
    <property type="protein sequence ID" value="AAI32160.1"/>
    <property type="molecule type" value="mRNA"/>
</dbReference>
<dbReference type="CCDS" id="CCDS19719.1"/>
<dbReference type="RefSeq" id="NP_444496.1">
    <property type="nucleotide sequence ID" value="NM_053266.1"/>
</dbReference>
<dbReference type="SMR" id="Q99NI3"/>
<dbReference type="FunCoup" id="Q99NI3">
    <property type="interactions" value="1486"/>
</dbReference>
<dbReference type="GlyGen" id="Q99NI3">
    <property type="glycosylation" value="1 site"/>
</dbReference>
<dbReference type="iPTMnet" id="Q99NI3"/>
<dbReference type="PhosphoSitePlus" id="Q99NI3"/>
<dbReference type="jPOST" id="Q99NI3"/>
<dbReference type="PaxDb" id="10090-ENSMUSP00000016086"/>
<dbReference type="PeptideAtlas" id="Q99NI3"/>
<dbReference type="ProteomicsDB" id="271058"/>
<dbReference type="DNASU" id="114674"/>
<dbReference type="Ensembl" id="ENSMUST00000016086.10">
    <property type="protein sequence ID" value="ENSMUSP00000016086.4"/>
    <property type="gene ID" value="ENSMUSG00000015942.10"/>
</dbReference>
<dbReference type="GeneID" id="114674"/>
<dbReference type="KEGG" id="mmu:114674"/>
<dbReference type="UCSC" id="uc008zve.1">
    <property type="organism name" value="mouse"/>
</dbReference>
<dbReference type="AGR" id="MGI:2149780"/>
<dbReference type="CTD" id="84163"/>
<dbReference type="MGI" id="MGI:2149780">
    <property type="gene designation" value="Gtf2ird2"/>
</dbReference>
<dbReference type="VEuPathDB" id="HostDB:ENSMUSG00000015942"/>
<dbReference type="eggNOG" id="ENOG502QS6T">
    <property type="taxonomic scope" value="Eukaryota"/>
</dbReference>
<dbReference type="GeneTree" id="ENSGT00940000162266"/>
<dbReference type="HOGENOM" id="CLU_310345_0_0_1"/>
<dbReference type="InParanoid" id="Q99NI3"/>
<dbReference type="OMA" id="VAMVCKG"/>
<dbReference type="OrthoDB" id="10061052at2759"/>
<dbReference type="PhylomeDB" id="Q99NI3"/>
<dbReference type="TreeFam" id="TF352524"/>
<dbReference type="BioGRID-ORCS" id="114674">
    <property type="hits" value="4 hits in 76 CRISPR screens"/>
</dbReference>
<dbReference type="ChiTaRS" id="Gtf2ird2">
    <property type="organism name" value="mouse"/>
</dbReference>
<dbReference type="PRO" id="PR:Q99NI3"/>
<dbReference type="Proteomes" id="UP000000589">
    <property type="component" value="Chromosome 5"/>
</dbReference>
<dbReference type="RNAct" id="Q99NI3">
    <property type="molecule type" value="protein"/>
</dbReference>
<dbReference type="Bgee" id="ENSMUSG00000015942">
    <property type="expression patterns" value="Expressed in saccule of membranous labyrinth and 242 other cell types or tissues"/>
</dbReference>
<dbReference type="ExpressionAtlas" id="Q99NI3">
    <property type="expression patterns" value="baseline and differential"/>
</dbReference>
<dbReference type="GO" id="GO:0005634">
    <property type="term" value="C:nucleus"/>
    <property type="evidence" value="ECO:0000314"/>
    <property type="project" value="MGI"/>
</dbReference>
<dbReference type="GO" id="GO:0003677">
    <property type="term" value="F:DNA binding"/>
    <property type="evidence" value="ECO:0007669"/>
    <property type="project" value="UniProtKB-KW"/>
</dbReference>
<dbReference type="GO" id="GO:0014883">
    <property type="term" value="P:transition between fast and slow fiber"/>
    <property type="evidence" value="ECO:0000314"/>
    <property type="project" value="MGI"/>
</dbReference>
<dbReference type="FunFam" id="3.90.1460.10:FF:000002">
    <property type="entry name" value="General transcription factor II-I isoform 1"/>
    <property type="match status" value="1"/>
</dbReference>
<dbReference type="Gene3D" id="3.90.1460.10">
    <property type="entry name" value="GTF2I-like"/>
    <property type="match status" value="2"/>
</dbReference>
<dbReference type="InterPro" id="IPR004212">
    <property type="entry name" value="GTF2I"/>
</dbReference>
<dbReference type="InterPro" id="IPR036647">
    <property type="entry name" value="GTF2I-like_rpt_sf"/>
</dbReference>
<dbReference type="InterPro" id="IPR042224">
    <property type="entry name" value="GTF2IRD2"/>
</dbReference>
<dbReference type="InterPro" id="IPR040647">
    <property type="entry name" value="SPIN-DOC_Znf-C2H2"/>
</dbReference>
<dbReference type="PANTHER" id="PTHR47831">
    <property type="entry name" value="GENERAL TRANSCRIPTION FACTOR II-I REPEAT DOMAIN-CONTAINING PROTEIN 2"/>
    <property type="match status" value="1"/>
</dbReference>
<dbReference type="PANTHER" id="PTHR47831:SF1">
    <property type="entry name" value="GENERAL TRANSCRIPTION FACTOR II-I REPEAT DOMAIN-CONTAINING PROTEIN 2A-RELATED"/>
    <property type="match status" value="1"/>
</dbReference>
<dbReference type="Pfam" id="PF02946">
    <property type="entry name" value="GTF2I"/>
    <property type="match status" value="2"/>
</dbReference>
<dbReference type="Pfam" id="PF18658">
    <property type="entry name" value="zf-C2H2_12"/>
    <property type="match status" value="1"/>
</dbReference>
<dbReference type="SUPFAM" id="SSF117773">
    <property type="entry name" value="GTF2I-like repeat"/>
    <property type="match status" value="2"/>
</dbReference>
<dbReference type="PROSITE" id="PS51139">
    <property type="entry name" value="GTF2I"/>
    <property type="match status" value="2"/>
</dbReference>
<feature type="chain" id="PRO_0000320122" description="General transcription factor II-I repeat domain-containing protein 2">
    <location>
        <begin position="1"/>
        <end position="936"/>
    </location>
</feature>
<feature type="repeat" description="GTF2I-like 1">
    <location>
        <begin position="95"/>
        <end position="189"/>
    </location>
</feature>
<feature type="repeat" description="GTF2I-like 2">
    <location>
        <begin position="319"/>
        <end position="413"/>
    </location>
</feature>
<feature type="region of interest" description="Disordered" evidence="2">
    <location>
        <begin position="199"/>
        <end position="222"/>
    </location>
</feature>
<sequence>MAQVAVTTQPTDEPSDGRMVVTFLMSALESMCKELAKSKAEVACIAVYETDVYVVGTERGCAFVNARQDLQKDFAQHCQGEGLPEEKPLCLGNGEACPGEAQLLRRAVQDHFCLCYRKALGTTAMVPVPYEQMLQDEAAVVVRGLPEGLAFQHPDNYSLATLKWILENKAGISFAVKRPFLGAESQLGGLGMVTDAGRPTVPPNDSYGPVSVKTEPMEDSGTSPRAAAMLIKTESEDPNYNVCNVQGSQHFSASSDVTGMELPSEESTRMVALETNEDPETEVKMEGNASPSNLVNSAAGVEDLRIIQVTVADNEKERLSGLEKIKQLREQVNDLFSRKFGEAIGVDFPVKVPYRKITFNPGCVVIDGMPPGVVFKAPGYLEISSMRRILDAADFIKFTVIRPLPGLELSNVGKRKIDQEGRVFQEKWERAYFFVEVQNIPTCLICKQSVSVSKEYNLRRHYQTNHSRHYDQYSGQAREEKLRELKRGLRKYLLGASEIVCPEQPFPNASPPTNSAVQPAEEVAGSLWEKLRQKIRSFVAYSIAIDEITDINDTTQLAIFIRGVDDNFDVSEELLDTVPMTGAKSGNEIFLRVEKSLKKFSIDWSKLVSVASTGTPAMMDANSGLVTKLRARAASCCKGADLKSVRCIIHPEWLCAQKLRMGHVMDVVVDSVNWICSRGLNHGDFTTLLYELDSQYGSLLYHTALKWLGRGLVLRRFFESLEEIDSFMSSRGKPVPQLSSRDWILDLAFLVDMTTHLNTLDASLQGHSQIVTQMYDFIRAFLAKLCLWETHLARNNLAHFPTLKSVSRSESDGLNYIPKIVELKAEFQRRLSDFKSCESELTLFSSPFSTTIDSVREELQMEVIDLQCNTVLRTKYDKVGVPDFYKHLWSSYPKYRSHCARMLSMFSSTHICEQLFSILKLSKKEAQWGAALQVAT</sequence>
<organism>
    <name type="scientific">Mus musculus</name>
    <name type="common">Mouse</name>
    <dbReference type="NCBI Taxonomy" id="10090"/>
    <lineage>
        <taxon>Eukaryota</taxon>
        <taxon>Metazoa</taxon>
        <taxon>Chordata</taxon>
        <taxon>Craniata</taxon>
        <taxon>Vertebrata</taxon>
        <taxon>Euteleostomi</taxon>
        <taxon>Mammalia</taxon>
        <taxon>Eutheria</taxon>
        <taxon>Euarchontoglires</taxon>
        <taxon>Glires</taxon>
        <taxon>Rodentia</taxon>
        <taxon>Myomorpha</taxon>
        <taxon>Muroidea</taxon>
        <taxon>Muridae</taxon>
        <taxon>Murinae</taxon>
        <taxon>Mus</taxon>
        <taxon>Mus</taxon>
    </lineage>
</organism>
<reference key="1">
    <citation type="journal article" date="2004" name="Eur. J. Hum. Genet.">
        <title>Isolation and characterisation of GTF2IRD2, a novel fusion gene and member of the TFII-I family of transcription factors, deleted in Williams-Beuren syndrome.</title>
        <authorList>
            <person name="Tipney H.J."/>
            <person name="Hinsley T.A."/>
            <person name="Brass A."/>
            <person name="Metcalfe K."/>
            <person name="Donnai D."/>
            <person name="Tassabehji M."/>
        </authorList>
    </citation>
    <scope>NUCLEOTIDE SEQUENCE [MRNA]</scope>
    <scope>TISSUE SPECIFICITY</scope>
    <scope>DEVELOPMENTAL STAGE</scope>
    <source>
        <strain>C57BL/6J</strain>
    </source>
</reference>
<reference key="2">
    <citation type="journal article" date="2004" name="Proc. Natl. Acad. Sci. U.S.A.">
        <title>GTF2IRD2 is located in the Williams-Beuren syndrome critical region 7q11.23 and encodes a protein with two TFII-I-like helix-loop-helix repeats.</title>
        <authorList>
            <person name="Makeyev A.V."/>
            <person name="Erdenechimeg L."/>
            <person name="Mungunsukh O."/>
            <person name="Roth J.J."/>
            <person name="Enkhmandakh B."/>
            <person name="Ruddle F.H."/>
            <person name="Bayarsaihan D."/>
        </authorList>
    </citation>
    <scope>NUCLEOTIDE SEQUENCE [MRNA]</scope>
</reference>
<reference key="3">
    <citation type="journal article" date="2004" name="Genome Res.">
        <title>The status, quality, and expansion of the NIH full-length cDNA project: the Mammalian Gene Collection (MGC).</title>
        <authorList>
            <consortium name="The MGC Project Team"/>
        </authorList>
    </citation>
    <scope>NUCLEOTIDE SEQUENCE [LARGE SCALE MRNA]</scope>
    <source>
        <tissue>Brain</tissue>
    </source>
</reference>
<reference key="4">
    <citation type="journal article" date="2007" name="Dev. Dyn.">
        <title>TFII-I gene family during tooth development: candidate genes for tooth anomalies in Williams syndrome.</title>
        <authorList>
            <person name="Ohazama A."/>
            <person name="Sharpe P.T."/>
        </authorList>
    </citation>
    <scope>DEVELOPMENTAL STAGE</scope>
</reference>